<feature type="chain" id="PRO_0000242564" description="UDP-N-acetylmuramate--L-alanine ligase">
    <location>
        <begin position="1"/>
        <end position="476"/>
    </location>
</feature>
<feature type="binding site" evidence="1">
    <location>
        <begin position="115"/>
        <end position="121"/>
    </location>
    <ligand>
        <name>ATP</name>
        <dbReference type="ChEBI" id="CHEBI:30616"/>
    </ligand>
</feature>
<name>MURC_PARM1</name>
<keyword id="KW-0067">ATP-binding</keyword>
<keyword id="KW-0131">Cell cycle</keyword>
<keyword id="KW-0132">Cell division</keyword>
<keyword id="KW-0133">Cell shape</keyword>
<keyword id="KW-0961">Cell wall biogenesis/degradation</keyword>
<keyword id="KW-0963">Cytoplasm</keyword>
<keyword id="KW-0436">Ligase</keyword>
<keyword id="KW-0547">Nucleotide-binding</keyword>
<keyword id="KW-0573">Peptidoglycan synthesis</keyword>
<dbReference type="EC" id="6.3.2.8" evidence="1"/>
<dbReference type="EMBL" id="AP007255">
    <property type="protein sequence ID" value="BAE52653.1"/>
    <property type="molecule type" value="Genomic_DNA"/>
</dbReference>
<dbReference type="RefSeq" id="WP_011386203.1">
    <property type="nucleotide sequence ID" value="NC_007626.1"/>
</dbReference>
<dbReference type="SMR" id="Q2W0H2"/>
<dbReference type="STRING" id="342108.amb3849"/>
<dbReference type="KEGG" id="mag:amb3849"/>
<dbReference type="HOGENOM" id="CLU_028104_2_2_5"/>
<dbReference type="OrthoDB" id="9804126at2"/>
<dbReference type="UniPathway" id="UPA00219"/>
<dbReference type="Proteomes" id="UP000007058">
    <property type="component" value="Chromosome"/>
</dbReference>
<dbReference type="GO" id="GO:0005737">
    <property type="term" value="C:cytoplasm"/>
    <property type="evidence" value="ECO:0007669"/>
    <property type="project" value="UniProtKB-SubCell"/>
</dbReference>
<dbReference type="GO" id="GO:0005524">
    <property type="term" value="F:ATP binding"/>
    <property type="evidence" value="ECO:0007669"/>
    <property type="project" value="UniProtKB-UniRule"/>
</dbReference>
<dbReference type="GO" id="GO:0008763">
    <property type="term" value="F:UDP-N-acetylmuramate-L-alanine ligase activity"/>
    <property type="evidence" value="ECO:0007669"/>
    <property type="project" value="UniProtKB-UniRule"/>
</dbReference>
<dbReference type="GO" id="GO:0051301">
    <property type="term" value="P:cell division"/>
    <property type="evidence" value="ECO:0007669"/>
    <property type="project" value="UniProtKB-KW"/>
</dbReference>
<dbReference type="GO" id="GO:0071555">
    <property type="term" value="P:cell wall organization"/>
    <property type="evidence" value="ECO:0007669"/>
    <property type="project" value="UniProtKB-KW"/>
</dbReference>
<dbReference type="GO" id="GO:0009252">
    <property type="term" value="P:peptidoglycan biosynthetic process"/>
    <property type="evidence" value="ECO:0007669"/>
    <property type="project" value="UniProtKB-UniRule"/>
</dbReference>
<dbReference type="GO" id="GO:0008360">
    <property type="term" value="P:regulation of cell shape"/>
    <property type="evidence" value="ECO:0007669"/>
    <property type="project" value="UniProtKB-KW"/>
</dbReference>
<dbReference type="Gene3D" id="3.90.190.20">
    <property type="entry name" value="Mur ligase, C-terminal domain"/>
    <property type="match status" value="1"/>
</dbReference>
<dbReference type="Gene3D" id="3.40.1190.10">
    <property type="entry name" value="Mur-like, catalytic domain"/>
    <property type="match status" value="1"/>
</dbReference>
<dbReference type="Gene3D" id="3.40.50.720">
    <property type="entry name" value="NAD(P)-binding Rossmann-like Domain"/>
    <property type="match status" value="1"/>
</dbReference>
<dbReference type="HAMAP" id="MF_00046">
    <property type="entry name" value="MurC"/>
    <property type="match status" value="1"/>
</dbReference>
<dbReference type="InterPro" id="IPR036565">
    <property type="entry name" value="Mur-like_cat_sf"/>
</dbReference>
<dbReference type="InterPro" id="IPR004101">
    <property type="entry name" value="Mur_ligase_C"/>
</dbReference>
<dbReference type="InterPro" id="IPR036615">
    <property type="entry name" value="Mur_ligase_C_dom_sf"/>
</dbReference>
<dbReference type="InterPro" id="IPR013221">
    <property type="entry name" value="Mur_ligase_cen"/>
</dbReference>
<dbReference type="InterPro" id="IPR000713">
    <property type="entry name" value="Mur_ligase_N"/>
</dbReference>
<dbReference type="InterPro" id="IPR050061">
    <property type="entry name" value="MurCDEF_pg_biosynth"/>
</dbReference>
<dbReference type="InterPro" id="IPR005758">
    <property type="entry name" value="UDP-N-AcMur_Ala_ligase_MurC"/>
</dbReference>
<dbReference type="NCBIfam" id="TIGR01082">
    <property type="entry name" value="murC"/>
    <property type="match status" value="1"/>
</dbReference>
<dbReference type="PANTHER" id="PTHR43445:SF3">
    <property type="entry name" value="UDP-N-ACETYLMURAMATE--L-ALANINE LIGASE"/>
    <property type="match status" value="1"/>
</dbReference>
<dbReference type="PANTHER" id="PTHR43445">
    <property type="entry name" value="UDP-N-ACETYLMURAMATE--L-ALANINE LIGASE-RELATED"/>
    <property type="match status" value="1"/>
</dbReference>
<dbReference type="Pfam" id="PF01225">
    <property type="entry name" value="Mur_ligase"/>
    <property type="match status" value="1"/>
</dbReference>
<dbReference type="Pfam" id="PF02875">
    <property type="entry name" value="Mur_ligase_C"/>
    <property type="match status" value="1"/>
</dbReference>
<dbReference type="Pfam" id="PF08245">
    <property type="entry name" value="Mur_ligase_M"/>
    <property type="match status" value="1"/>
</dbReference>
<dbReference type="SUPFAM" id="SSF51984">
    <property type="entry name" value="MurCD N-terminal domain"/>
    <property type="match status" value="1"/>
</dbReference>
<dbReference type="SUPFAM" id="SSF53623">
    <property type="entry name" value="MurD-like peptide ligases, catalytic domain"/>
    <property type="match status" value="1"/>
</dbReference>
<dbReference type="SUPFAM" id="SSF53244">
    <property type="entry name" value="MurD-like peptide ligases, peptide-binding domain"/>
    <property type="match status" value="1"/>
</dbReference>
<accession>Q2W0H2</accession>
<sequence length="476" mass="50704">MRTMSLNIGTIHFVGIGGIGMSGIAEILHNLGYSVQGTDIADNYNVERLRKMGIRVHIGHAAEALGDARVVVVSSAVKADNPEVQAARAKLVPVVRRAEMLAELMRLKSAIAIGGTHGKTTTTSLIAALLDTARLDPTVINGGIINAYGTNARLGASEWMVVEADESDGSFIKLPSTAVVVTNIDPEHMDHYGTVERLHEAFRTFVENIPFYGFAAMCIDHPEVQALVARVPDRKLVTYGFNHQALVRVEKLSMDITGARYDVVITDRVTGATRTIADIHLPMYGEHNVLNSLAAIAVANELGLPNDVVKTALGGFKGVKRRFTRTGEAKGVTVIDDYGHHPVEIAAVLKAARSACQGNVIAVVQPHRYSRLSSLFAEFCTCFNDADMVIVADVYAAGEKPMEGFDKAALVKGLQEHGHRRVMALADSKALAPLVNSLAGPGDMVVCLGAGNITSWAHALPADLAALPDPSPGGAE</sequence>
<comment type="function">
    <text evidence="1">Cell wall formation.</text>
</comment>
<comment type="catalytic activity">
    <reaction evidence="1">
        <text>UDP-N-acetyl-alpha-D-muramate + L-alanine + ATP = UDP-N-acetyl-alpha-D-muramoyl-L-alanine + ADP + phosphate + H(+)</text>
        <dbReference type="Rhea" id="RHEA:23372"/>
        <dbReference type="ChEBI" id="CHEBI:15378"/>
        <dbReference type="ChEBI" id="CHEBI:30616"/>
        <dbReference type="ChEBI" id="CHEBI:43474"/>
        <dbReference type="ChEBI" id="CHEBI:57972"/>
        <dbReference type="ChEBI" id="CHEBI:70757"/>
        <dbReference type="ChEBI" id="CHEBI:83898"/>
        <dbReference type="ChEBI" id="CHEBI:456216"/>
        <dbReference type="EC" id="6.3.2.8"/>
    </reaction>
</comment>
<comment type="pathway">
    <text evidence="1">Cell wall biogenesis; peptidoglycan biosynthesis.</text>
</comment>
<comment type="subcellular location">
    <subcellularLocation>
        <location evidence="1">Cytoplasm</location>
    </subcellularLocation>
</comment>
<comment type="similarity">
    <text evidence="1">Belongs to the MurCDEF family.</text>
</comment>
<reference key="1">
    <citation type="journal article" date="2005" name="DNA Res.">
        <title>Complete genome sequence of the facultative anaerobic magnetotactic bacterium Magnetospirillum sp. strain AMB-1.</title>
        <authorList>
            <person name="Matsunaga T."/>
            <person name="Okamura Y."/>
            <person name="Fukuda Y."/>
            <person name="Wahyudi A.T."/>
            <person name="Murase Y."/>
            <person name="Takeyama H."/>
        </authorList>
    </citation>
    <scope>NUCLEOTIDE SEQUENCE [LARGE SCALE GENOMIC DNA]</scope>
    <source>
        <strain>ATCC 700264 / AMB-1</strain>
    </source>
</reference>
<proteinExistence type="inferred from homology"/>
<protein>
    <recommendedName>
        <fullName evidence="1">UDP-N-acetylmuramate--L-alanine ligase</fullName>
        <ecNumber evidence="1">6.3.2.8</ecNumber>
    </recommendedName>
    <alternativeName>
        <fullName evidence="1">UDP-N-acetylmuramoyl-L-alanine synthetase</fullName>
    </alternativeName>
</protein>
<gene>
    <name evidence="1" type="primary">murC</name>
    <name type="ordered locus">amb3849</name>
</gene>
<organism>
    <name type="scientific">Paramagnetospirillum magneticum (strain ATCC 700264 / AMB-1)</name>
    <name type="common">Magnetospirillum magneticum</name>
    <dbReference type="NCBI Taxonomy" id="342108"/>
    <lineage>
        <taxon>Bacteria</taxon>
        <taxon>Pseudomonadati</taxon>
        <taxon>Pseudomonadota</taxon>
        <taxon>Alphaproteobacteria</taxon>
        <taxon>Rhodospirillales</taxon>
        <taxon>Magnetospirillaceae</taxon>
        <taxon>Paramagnetospirillum</taxon>
    </lineage>
</organism>
<evidence type="ECO:0000255" key="1">
    <source>
        <dbReference type="HAMAP-Rule" id="MF_00046"/>
    </source>
</evidence>